<keyword id="KW-0028">Amino-acid biosynthesis</keyword>
<keyword id="KW-0963">Cytoplasm</keyword>
<keyword id="KW-0554">One-carbon metabolism</keyword>
<keyword id="KW-0663">Pyridoxal phosphate</keyword>
<keyword id="KW-0808">Transferase</keyword>
<protein>
    <recommendedName>
        <fullName evidence="1">Serine hydroxymethyltransferase</fullName>
        <shortName evidence="1">SHMT</shortName>
        <shortName evidence="1">Serine methylase</shortName>
        <ecNumber evidence="1">2.1.2.1</ecNumber>
    </recommendedName>
</protein>
<name>GLYA_HISS2</name>
<evidence type="ECO:0000255" key="1">
    <source>
        <dbReference type="HAMAP-Rule" id="MF_00051"/>
    </source>
</evidence>
<reference key="1">
    <citation type="submission" date="2008-02" db="EMBL/GenBank/DDBJ databases">
        <title>Complete sequence of Haemophilus somnus 2336.</title>
        <authorList>
            <consortium name="US DOE Joint Genome Institute"/>
            <person name="Siddaramappa S."/>
            <person name="Duncan A.J."/>
            <person name="Challacombe J.F."/>
            <person name="Rainey D."/>
            <person name="Gillaspy A.F."/>
            <person name="Carson M."/>
            <person name="Gipson J."/>
            <person name="Gipson M."/>
            <person name="Bruce D."/>
            <person name="Detter J.C."/>
            <person name="Han C.S."/>
            <person name="Land M."/>
            <person name="Tapia R."/>
            <person name="Thompson L.S."/>
            <person name="Orvis J."/>
            <person name="Zaitshik J."/>
            <person name="Barnes G."/>
            <person name="Brettin T.S."/>
            <person name="Dyer D.W."/>
            <person name="Inzana T.J."/>
        </authorList>
    </citation>
    <scope>NUCLEOTIDE SEQUENCE [LARGE SCALE GENOMIC DNA]</scope>
    <source>
        <strain>2336</strain>
    </source>
</reference>
<proteinExistence type="inferred from homology"/>
<sequence length="419" mass="45596">MLKRSMNIADYDPVLWQAIQDENLRQEEHIELIASENYASPRVMEAQGCQFTNKYAEGYPGKRYYGGCEYADIVEQLAIDRAKALFGADYANVQPHSGSQANAAVYMALLNPGDTILGMSLAHGGHLTHGASVSFSGKIYKAEQYGITSEGLIDYDALRKQAHEVKPKMIVGGFSAYSQIVDWAKMREIADEVGAYLFVDMAHVAGLIAAGVYPSPMPHAHVVTTTTHKTLAGPRGGLILANGNEELYKKLNSAVFPAGQGGPLVHVIAAKAVCFKEALEPEFKTYQAQVVKNAKAMVKVFKQRGYNVVSNGTENHLFLVDLVNHGLTGKAADAALSRANITVNKNAVPNDPQKPFVTSGIRVGTPAVTRRGFNEEDVAELAGWMCDILDSMNKDNHEQVIADTKEKVLAICKRLPVYP</sequence>
<gene>
    <name evidence="1" type="primary">glyA</name>
    <name type="ordered locus">HSM_0382</name>
</gene>
<accession>B0UWS8</accession>
<feature type="chain" id="PRO_1000074899" description="Serine hydroxymethyltransferase">
    <location>
        <begin position="1"/>
        <end position="419"/>
    </location>
</feature>
<feature type="binding site" evidence="1">
    <location>
        <position position="121"/>
    </location>
    <ligand>
        <name>(6S)-5,6,7,8-tetrahydrofolate</name>
        <dbReference type="ChEBI" id="CHEBI:57453"/>
    </ligand>
</feature>
<feature type="binding site" evidence="1">
    <location>
        <begin position="125"/>
        <end position="127"/>
    </location>
    <ligand>
        <name>(6S)-5,6,7,8-tetrahydrofolate</name>
        <dbReference type="ChEBI" id="CHEBI:57453"/>
    </ligand>
</feature>
<feature type="site" description="Plays an important role in substrate specificity" evidence="1">
    <location>
        <position position="228"/>
    </location>
</feature>
<feature type="modified residue" description="N6-(pyridoxal phosphate)lysine" evidence="1">
    <location>
        <position position="229"/>
    </location>
</feature>
<organism>
    <name type="scientific">Histophilus somni (strain 2336)</name>
    <name type="common">Haemophilus somnus</name>
    <dbReference type="NCBI Taxonomy" id="228400"/>
    <lineage>
        <taxon>Bacteria</taxon>
        <taxon>Pseudomonadati</taxon>
        <taxon>Pseudomonadota</taxon>
        <taxon>Gammaproteobacteria</taxon>
        <taxon>Pasteurellales</taxon>
        <taxon>Pasteurellaceae</taxon>
        <taxon>Histophilus</taxon>
    </lineage>
</organism>
<comment type="function">
    <text evidence="1">Catalyzes the reversible interconversion of serine and glycine with tetrahydrofolate (THF) serving as the one-carbon carrier. This reaction serves as the major source of one-carbon groups required for the biosynthesis of purines, thymidylate, methionine, and other important biomolecules. Also exhibits THF-independent aldolase activity toward beta-hydroxyamino acids, producing glycine and aldehydes, via a retro-aldol mechanism.</text>
</comment>
<comment type="catalytic activity">
    <reaction evidence="1">
        <text>(6R)-5,10-methylene-5,6,7,8-tetrahydrofolate + glycine + H2O = (6S)-5,6,7,8-tetrahydrofolate + L-serine</text>
        <dbReference type="Rhea" id="RHEA:15481"/>
        <dbReference type="ChEBI" id="CHEBI:15377"/>
        <dbReference type="ChEBI" id="CHEBI:15636"/>
        <dbReference type="ChEBI" id="CHEBI:33384"/>
        <dbReference type="ChEBI" id="CHEBI:57305"/>
        <dbReference type="ChEBI" id="CHEBI:57453"/>
        <dbReference type="EC" id="2.1.2.1"/>
    </reaction>
</comment>
<comment type="cofactor">
    <cofactor evidence="1">
        <name>pyridoxal 5'-phosphate</name>
        <dbReference type="ChEBI" id="CHEBI:597326"/>
    </cofactor>
</comment>
<comment type="pathway">
    <text evidence="1">One-carbon metabolism; tetrahydrofolate interconversion.</text>
</comment>
<comment type="pathway">
    <text evidence="1">Amino-acid biosynthesis; glycine biosynthesis; glycine from L-serine: step 1/1.</text>
</comment>
<comment type="subunit">
    <text evidence="1">Homodimer.</text>
</comment>
<comment type="subcellular location">
    <subcellularLocation>
        <location evidence="1">Cytoplasm</location>
    </subcellularLocation>
</comment>
<comment type="similarity">
    <text evidence="1">Belongs to the SHMT family.</text>
</comment>
<dbReference type="EC" id="2.1.2.1" evidence="1"/>
<dbReference type="EMBL" id="CP000947">
    <property type="protein sequence ID" value="ACA32021.1"/>
    <property type="molecule type" value="Genomic_DNA"/>
</dbReference>
<dbReference type="RefSeq" id="WP_012341234.1">
    <property type="nucleotide sequence ID" value="NC_010519.1"/>
</dbReference>
<dbReference type="SMR" id="B0UWS8"/>
<dbReference type="STRING" id="228400.HSM_0382"/>
<dbReference type="GeneID" id="31486662"/>
<dbReference type="KEGG" id="hsm:HSM_0382"/>
<dbReference type="HOGENOM" id="CLU_022477_2_1_6"/>
<dbReference type="UniPathway" id="UPA00193"/>
<dbReference type="UniPathway" id="UPA00288">
    <property type="reaction ID" value="UER01023"/>
</dbReference>
<dbReference type="GO" id="GO:0005829">
    <property type="term" value="C:cytosol"/>
    <property type="evidence" value="ECO:0007669"/>
    <property type="project" value="TreeGrafter"/>
</dbReference>
<dbReference type="GO" id="GO:0004372">
    <property type="term" value="F:glycine hydroxymethyltransferase activity"/>
    <property type="evidence" value="ECO:0007669"/>
    <property type="project" value="UniProtKB-UniRule"/>
</dbReference>
<dbReference type="GO" id="GO:0030170">
    <property type="term" value="F:pyridoxal phosphate binding"/>
    <property type="evidence" value="ECO:0007669"/>
    <property type="project" value="UniProtKB-UniRule"/>
</dbReference>
<dbReference type="GO" id="GO:0019264">
    <property type="term" value="P:glycine biosynthetic process from serine"/>
    <property type="evidence" value="ECO:0007669"/>
    <property type="project" value="UniProtKB-UniRule"/>
</dbReference>
<dbReference type="GO" id="GO:0035999">
    <property type="term" value="P:tetrahydrofolate interconversion"/>
    <property type="evidence" value="ECO:0007669"/>
    <property type="project" value="UniProtKB-UniRule"/>
</dbReference>
<dbReference type="CDD" id="cd00378">
    <property type="entry name" value="SHMT"/>
    <property type="match status" value="1"/>
</dbReference>
<dbReference type="FunFam" id="3.40.640.10:FF:000001">
    <property type="entry name" value="Serine hydroxymethyltransferase"/>
    <property type="match status" value="1"/>
</dbReference>
<dbReference type="FunFam" id="3.90.1150.10:FF:000003">
    <property type="entry name" value="Serine hydroxymethyltransferase"/>
    <property type="match status" value="1"/>
</dbReference>
<dbReference type="Gene3D" id="3.90.1150.10">
    <property type="entry name" value="Aspartate Aminotransferase, domain 1"/>
    <property type="match status" value="1"/>
</dbReference>
<dbReference type="Gene3D" id="3.40.640.10">
    <property type="entry name" value="Type I PLP-dependent aspartate aminotransferase-like (Major domain)"/>
    <property type="match status" value="1"/>
</dbReference>
<dbReference type="HAMAP" id="MF_00051">
    <property type="entry name" value="SHMT"/>
    <property type="match status" value="1"/>
</dbReference>
<dbReference type="InterPro" id="IPR015424">
    <property type="entry name" value="PyrdxlP-dep_Trfase"/>
</dbReference>
<dbReference type="InterPro" id="IPR015421">
    <property type="entry name" value="PyrdxlP-dep_Trfase_major"/>
</dbReference>
<dbReference type="InterPro" id="IPR015422">
    <property type="entry name" value="PyrdxlP-dep_Trfase_small"/>
</dbReference>
<dbReference type="InterPro" id="IPR001085">
    <property type="entry name" value="Ser_HO-MeTrfase"/>
</dbReference>
<dbReference type="InterPro" id="IPR049943">
    <property type="entry name" value="Ser_HO-MeTrfase-like"/>
</dbReference>
<dbReference type="InterPro" id="IPR019798">
    <property type="entry name" value="Ser_HO-MeTrfase_PLP_BS"/>
</dbReference>
<dbReference type="InterPro" id="IPR039429">
    <property type="entry name" value="SHMT-like_dom"/>
</dbReference>
<dbReference type="NCBIfam" id="NF000586">
    <property type="entry name" value="PRK00011.1"/>
    <property type="match status" value="1"/>
</dbReference>
<dbReference type="PANTHER" id="PTHR11680">
    <property type="entry name" value="SERINE HYDROXYMETHYLTRANSFERASE"/>
    <property type="match status" value="1"/>
</dbReference>
<dbReference type="PANTHER" id="PTHR11680:SF50">
    <property type="entry name" value="SERINE HYDROXYMETHYLTRANSFERASE"/>
    <property type="match status" value="1"/>
</dbReference>
<dbReference type="Pfam" id="PF00464">
    <property type="entry name" value="SHMT"/>
    <property type="match status" value="1"/>
</dbReference>
<dbReference type="PIRSF" id="PIRSF000412">
    <property type="entry name" value="SHMT"/>
    <property type="match status" value="1"/>
</dbReference>
<dbReference type="SUPFAM" id="SSF53383">
    <property type="entry name" value="PLP-dependent transferases"/>
    <property type="match status" value="1"/>
</dbReference>
<dbReference type="PROSITE" id="PS00096">
    <property type="entry name" value="SHMT"/>
    <property type="match status" value="1"/>
</dbReference>